<reference key="1">
    <citation type="submission" date="1998-05" db="EMBL/GenBank/DDBJ databases">
        <authorList>
            <person name="Koh N."/>
            <person name="Fujimori T."/>
            <person name="Nabeshima Y."/>
        </authorList>
    </citation>
    <scope>NUCLEOTIDE SEQUENCE [MRNA] (ISOFORMS 1 AND 2)</scope>
</reference>
<organism>
    <name type="scientific">Macaca fascicularis</name>
    <name type="common">Crab-eating macaque</name>
    <name type="synonym">Cynomolgus monkey</name>
    <dbReference type="NCBI Taxonomy" id="9541"/>
    <lineage>
        <taxon>Eukaryota</taxon>
        <taxon>Metazoa</taxon>
        <taxon>Chordata</taxon>
        <taxon>Craniata</taxon>
        <taxon>Vertebrata</taxon>
        <taxon>Euteleostomi</taxon>
        <taxon>Mammalia</taxon>
        <taxon>Eutheria</taxon>
        <taxon>Euarchontoglires</taxon>
        <taxon>Primates</taxon>
        <taxon>Haplorrhini</taxon>
        <taxon>Catarrhini</taxon>
        <taxon>Cercopithecidae</taxon>
        <taxon>Cercopithecinae</taxon>
        <taxon>Macaca</taxon>
    </lineage>
</organism>
<feature type="signal peptide" evidence="3">
    <location>
        <begin position="1"/>
        <end position="35"/>
    </location>
</feature>
<feature type="chain" id="PRO_0000042245" description="Klotho">
    <location>
        <begin position="36"/>
        <end position="1014"/>
    </location>
</feature>
<feature type="chain" id="PRO_0000042246" description="Klotho peptide" evidence="1">
    <location>
        <begin position="36"/>
        <end status="unknown"/>
    </location>
</feature>
<feature type="topological domain" description="Extracellular" evidence="3">
    <location>
        <begin position="36"/>
        <end position="983"/>
    </location>
</feature>
<feature type="transmembrane region" description="Helical" evidence="3">
    <location>
        <begin position="984"/>
        <end position="1004"/>
    </location>
</feature>
<feature type="topological domain" description="Cytoplasmic" evidence="3">
    <location>
        <begin position="1005"/>
        <end position="1014"/>
    </location>
</feature>
<feature type="region of interest" description="Glycosyl hydrolase-1 1">
    <location>
        <begin position="59"/>
        <end position="508"/>
    </location>
</feature>
<feature type="region of interest" description="Glycosyl hydrolase-1 2">
    <location>
        <begin position="517"/>
        <end position="955"/>
    </location>
</feature>
<feature type="glycosylation site" description="N-linked (GlcNAc...) asparagine" evidence="3">
    <location>
        <position position="161"/>
    </location>
</feature>
<feature type="glycosylation site" description="N-linked (GlcNAc...) asparagine" evidence="3">
    <location>
        <position position="285"/>
    </location>
</feature>
<feature type="glycosylation site" description="N-linked (GlcNAc...) asparagine" evidence="3">
    <location>
        <position position="346"/>
    </location>
</feature>
<feature type="glycosylation site" description="N-linked (GlcNAc...) asparagine" evidence="3">
    <location>
        <position position="609"/>
    </location>
</feature>
<feature type="glycosylation site" description="N-linked (GlcNAc...) asparagine" evidence="3">
    <location>
        <position position="614"/>
    </location>
</feature>
<feature type="glycosylation site" description="N-linked (GlcNAc...) asparagine" evidence="3">
    <location>
        <position position="696"/>
    </location>
</feature>
<feature type="splice variant" id="VSP_015826" description="In isoform 2." evidence="4">
    <original>DTTLSQFTDLNVYLW</original>
    <variation>SQLAKPISSLTKPYH</variation>
    <location>
        <begin position="537"/>
        <end position="551"/>
    </location>
</feature>
<feature type="splice variant" id="VSP_015827" description="In isoform 2." evidence="4">
    <location>
        <begin position="552"/>
        <end position="1014"/>
    </location>
</feature>
<evidence type="ECO:0000250" key="1"/>
<evidence type="ECO:0000250" key="2">
    <source>
        <dbReference type="UniProtKB" id="O35082"/>
    </source>
</evidence>
<evidence type="ECO:0000255" key="3"/>
<evidence type="ECO:0000303" key="4">
    <source ref="1"/>
</evidence>
<evidence type="ECO:0000305" key="5"/>
<protein>
    <recommendedName>
        <fullName>Klotho</fullName>
        <ecNumber>3.2.1.31</ecNumber>
    </recommendedName>
    <component>
        <recommendedName>
            <fullName>Klotho peptide</fullName>
        </recommendedName>
    </component>
</protein>
<keyword id="KW-0025">Alternative splicing</keyword>
<keyword id="KW-1003">Cell membrane</keyword>
<keyword id="KW-0325">Glycoprotein</keyword>
<keyword id="KW-0326">Glycosidase</keyword>
<keyword id="KW-0378">Hydrolase</keyword>
<keyword id="KW-0472">Membrane</keyword>
<keyword id="KW-1185">Reference proteome</keyword>
<keyword id="KW-0677">Repeat</keyword>
<keyword id="KW-0964">Secreted</keyword>
<keyword id="KW-0732">Signal</keyword>
<keyword id="KW-0812">Transmembrane</keyword>
<keyword id="KW-1133">Transmembrane helix</keyword>
<sequence length="1014" mass="116469">MPASAPPRRPRPPPPSLSLSLLLVLLGLAGRRLRAEPGDGAQTWARFARPPAPEAAGLFQGTFPDGFLWAVGSAAYQTEGGWQQHGKGASIWDTFTHHPLAPPGDSRIANVPSGAPSPLQPATGDVASDSYNNVFRDTEALRELGVTHYRFSISWARVLPNGSAGVPNREGLRYYRRLLERLRELGVQPVVTLYHWDLPQRLQDAYGGWANRALADHFRDYAELCFRHFGGQVKYWITIDNPYVVAWHGYATGRLAPGIRGSPRLGYLVAHNLLLAHAKVWHLYNTSFRPTQGGQVSIALSSHWINPRRMTDHSIKECQKSLDFVLGWFAKPIFIDGDYPESMKNNLSSLLPDFTESEKKFIKGTADFFALSFGPTLSFQLLDPHMKFRQLESPSLRQLLSWIDLEYNHPQIFIVENGWFVSGTTKRDDAKYMYYLKKFIMETLKAIKLDGVDVIGYTAWSLMDGFEWHRGYSIRRGLFYVDFLSQEKTLLPKSSALFYQKLIEKNGFPPLPENQPLEGTFPCDFAWGIVDNYIQVDTTLSQFTDLNVYLWDVHHSKRLIKVDGVVTKKRKSYCVDFAAIQPQITLLQEMHVTHFRFSLDWALILPLGNQSQVNHTILQYYRCMVSELVRVNITPVVALWQPVAPNQGLPRLLARQGAWENPYTALAFAEYARLCFQELGHHVKLWITMNEPYTRNMTYSAGHNLLKAHALAWHVYNEKFRHAQNGKISIALQADWIEPACPFSQKDKEVAERVLEFDIGWLAEPIFGSGDYPWVMRDWLNQRNNFLLPYFTEDEKKLIQGTFDFLALSHYTTILVDSEKEDPIKYNDYLEVQEMTDITWLNSPSQVAVVPWGLRKVLNWLKFKYGDLPMYIISNGIDDGLHAEDDQLRVYYMQNYINEALKAHILDGINLCGYFAYSFNDRTAPRFGLYRFAADQFEPKPSMKHYRKIIDSNGFPGPETLEKFCPEEFTVCTECSFFHTRKPLVAFIAFLFFAFIVSLSLIFYYSKKGRRRYQ</sequence>
<gene>
    <name type="primary">KL</name>
</gene>
<comment type="function">
    <text evidence="1">May have weak glycosidase activity towards glucuronylated steroids. However, it lacks essential active site Glu residues at positions 241 and 874, suggesting it may be inactive as a glycosidase in vivo. May be involved in the regulation of calcium and phosphorus homeostasis by inhibiting the synthesis of active vitamin D (By similarity). Essential factor for the specific interaction between FGF23 and FGFR1 (By similarity).</text>
</comment>
<comment type="function">
    <text evidence="1">The Klotho peptide generated by cleavage of the membrane-bound isoform may be an anti-aging circulating hormone which would extend life span by inhibiting insulin/IGF1 signaling.</text>
</comment>
<comment type="catalytic activity">
    <reaction>
        <text>a beta-D-glucuronoside + H2O = D-glucuronate + an alcohol</text>
        <dbReference type="Rhea" id="RHEA:17633"/>
        <dbReference type="ChEBI" id="CHEBI:15377"/>
        <dbReference type="ChEBI" id="CHEBI:30879"/>
        <dbReference type="ChEBI" id="CHEBI:58720"/>
        <dbReference type="ChEBI" id="CHEBI:83411"/>
        <dbReference type="EC" id="3.2.1.31"/>
    </reaction>
</comment>
<comment type="subunit">
    <text evidence="1">Homodimer. Interacts with FGF23 and FGFR1.</text>
</comment>
<comment type="subcellular location">
    <molecule>Isoform 1</molecule>
    <subcellularLocation>
        <location evidence="2">Cell membrane</location>
        <topology evidence="2">Single-pass type I membrane protein</topology>
    </subcellularLocation>
    <subcellularLocation>
        <location evidence="2">Apical cell membrane</location>
        <topology evidence="2">Single-pass type I membrane protein</topology>
    </subcellularLocation>
    <text evidence="2">Isoform 1 shedding leads to a soluble peptide.</text>
</comment>
<comment type="subcellular location">
    <molecule>Isoform 2</molecule>
    <subcellularLocation>
        <location evidence="2">Secreted</location>
    </subcellularLocation>
</comment>
<comment type="subcellular location">
    <molecule>Klotho peptide</molecule>
    <subcellularLocation>
        <location evidence="2">Secreted</location>
    </subcellularLocation>
</comment>
<comment type="alternative products">
    <event type="alternative splicing"/>
    <isoform>
        <id>Q8WP17-1</id>
        <name>1</name>
        <name>Membrane-bound</name>
        <sequence type="displayed"/>
    </isoform>
    <isoform>
        <id>Q8WP17-2</id>
        <name>2</name>
        <name>Secreted</name>
        <sequence type="described" ref="VSP_015826 VSP_015827"/>
    </isoform>
</comment>
<comment type="domain">
    <text>Contains 2 glycosyl hydrolase 1 regions. However, the first region lacks the essential Glu active site residue at position 241, and the second one lacks the essential Glu active site residue at position 874.</text>
</comment>
<comment type="similarity">
    <text evidence="5">Belongs to the glycosyl hydrolase 1 family. Klotho subfamily.</text>
</comment>
<comment type="online information" name="Protein Spotlight">
    <link uri="https://www.proteinspotlight.org/back_issues/065"/>
    <text>The thread of life - Issue 65 of December 2005</text>
</comment>
<accession>Q8WP17</accession>
<accession>Q8WP18</accession>
<name>KLOT_MACFA</name>
<proteinExistence type="evidence at transcript level"/>
<dbReference type="EC" id="3.2.1.31"/>
<dbReference type="EMBL" id="AF064053">
    <property type="protein sequence ID" value="AAC77917.1"/>
    <property type="molecule type" value="mRNA"/>
</dbReference>
<dbReference type="EMBL" id="AF064054">
    <property type="protein sequence ID" value="AAC77918.1"/>
    <property type="molecule type" value="mRNA"/>
</dbReference>
<dbReference type="SMR" id="Q8WP17"/>
<dbReference type="STRING" id="9541.ENSMFAP00000021797"/>
<dbReference type="GlyCosmos" id="Q8WP17">
    <property type="glycosylation" value="6 sites, No reported glycans"/>
</dbReference>
<dbReference type="eggNOG" id="KOG0626">
    <property type="taxonomic scope" value="Eukaryota"/>
</dbReference>
<dbReference type="Proteomes" id="UP000233100">
    <property type="component" value="Unplaced"/>
</dbReference>
<dbReference type="GO" id="GO:0016324">
    <property type="term" value="C:apical plasma membrane"/>
    <property type="evidence" value="ECO:0007669"/>
    <property type="project" value="UniProtKB-SubCell"/>
</dbReference>
<dbReference type="GO" id="GO:0005576">
    <property type="term" value="C:extracellular region"/>
    <property type="evidence" value="ECO:0007669"/>
    <property type="project" value="UniProtKB-SubCell"/>
</dbReference>
<dbReference type="GO" id="GO:0004566">
    <property type="term" value="F:beta-glucuronidase activity"/>
    <property type="evidence" value="ECO:0007669"/>
    <property type="project" value="UniProtKB-EC"/>
</dbReference>
<dbReference type="GO" id="GO:0017134">
    <property type="term" value="F:fibroblast growth factor binding"/>
    <property type="evidence" value="ECO:0007669"/>
    <property type="project" value="TreeGrafter"/>
</dbReference>
<dbReference type="GO" id="GO:0005104">
    <property type="term" value="F:fibroblast growth factor receptor binding"/>
    <property type="evidence" value="ECO:0007669"/>
    <property type="project" value="TreeGrafter"/>
</dbReference>
<dbReference type="GO" id="GO:0005975">
    <property type="term" value="P:carbohydrate metabolic process"/>
    <property type="evidence" value="ECO:0007669"/>
    <property type="project" value="InterPro"/>
</dbReference>
<dbReference type="GO" id="GO:0008543">
    <property type="term" value="P:fibroblast growth factor receptor signaling pathway"/>
    <property type="evidence" value="ECO:0007669"/>
    <property type="project" value="TreeGrafter"/>
</dbReference>
<dbReference type="FunFam" id="3.20.20.80:FF:000042">
    <property type="entry name" value="Klotho"/>
    <property type="match status" value="1"/>
</dbReference>
<dbReference type="FunFam" id="3.20.20.80:FF:000062">
    <property type="entry name" value="Klotho"/>
    <property type="match status" value="1"/>
</dbReference>
<dbReference type="Gene3D" id="3.20.20.80">
    <property type="entry name" value="Glycosidases"/>
    <property type="match status" value="2"/>
</dbReference>
<dbReference type="InterPro" id="IPR001360">
    <property type="entry name" value="Glyco_hydro_1"/>
</dbReference>
<dbReference type="InterPro" id="IPR033132">
    <property type="entry name" value="Glyco_hydro_1_N_CS"/>
</dbReference>
<dbReference type="InterPro" id="IPR017853">
    <property type="entry name" value="Glycoside_hydrolase_SF"/>
</dbReference>
<dbReference type="PANTHER" id="PTHR10353">
    <property type="entry name" value="GLYCOSYL HYDROLASE"/>
    <property type="match status" value="1"/>
</dbReference>
<dbReference type="PANTHER" id="PTHR10353:SF10">
    <property type="entry name" value="KLOTHO"/>
    <property type="match status" value="1"/>
</dbReference>
<dbReference type="Pfam" id="PF00232">
    <property type="entry name" value="Glyco_hydro_1"/>
    <property type="match status" value="3"/>
</dbReference>
<dbReference type="PRINTS" id="PR00131">
    <property type="entry name" value="GLHYDRLASE1"/>
</dbReference>
<dbReference type="SUPFAM" id="SSF51445">
    <property type="entry name" value="(Trans)glycosidases"/>
    <property type="match status" value="2"/>
</dbReference>
<dbReference type="PROSITE" id="PS00653">
    <property type="entry name" value="GLYCOSYL_HYDROL_F1_2"/>
    <property type="match status" value="1"/>
</dbReference>